<proteinExistence type="inferred from homology"/>
<accession>P39589</accession>
<keyword id="KW-1003">Cell membrane</keyword>
<keyword id="KW-0472">Membrane</keyword>
<keyword id="KW-1185">Reference proteome</keyword>
<keyword id="KW-0769">Symport</keyword>
<keyword id="KW-0812">Transmembrane</keyword>
<keyword id="KW-1133">Transmembrane helix</keyword>
<keyword id="KW-0813">Transport</keyword>
<reference key="1">
    <citation type="journal article" date="1993" name="Mol. Microbiol.">
        <title>Bacillus subtilis genome project: cloning and sequencing of the 97 kb region from 325 degrees to 333 degrees.</title>
        <authorList>
            <person name="Glaser P."/>
            <person name="Kunst F."/>
            <person name="Arnaud M."/>
            <person name="Coudart M.P."/>
            <person name="Gonzales W."/>
            <person name="Hullo M.-F."/>
            <person name="Ionescu M."/>
            <person name="Lubochinsky B."/>
            <person name="Marcelino L."/>
            <person name="Moszer I."/>
            <person name="Presecan E."/>
            <person name="Santana M."/>
            <person name="Schneider E."/>
            <person name="Schweizer J."/>
            <person name="Vertes A."/>
            <person name="Rapoport G."/>
            <person name="Danchin A."/>
        </authorList>
    </citation>
    <scope>NUCLEOTIDE SEQUENCE [GENOMIC DNA]</scope>
    <source>
        <strain>168</strain>
    </source>
</reference>
<reference key="2">
    <citation type="journal article" date="1997" name="Nature">
        <title>The complete genome sequence of the Gram-positive bacterium Bacillus subtilis.</title>
        <authorList>
            <person name="Kunst F."/>
            <person name="Ogasawara N."/>
            <person name="Moszer I."/>
            <person name="Albertini A.M."/>
            <person name="Alloni G."/>
            <person name="Azevedo V."/>
            <person name="Bertero M.G."/>
            <person name="Bessieres P."/>
            <person name="Bolotin A."/>
            <person name="Borchert S."/>
            <person name="Borriss R."/>
            <person name="Boursier L."/>
            <person name="Brans A."/>
            <person name="Braun M."/>
            <person name="Brignell S.C."/>
            <person name="Bron S."/>
            <person name="Brouillet S."/>
            <person name="Bruschi C.V."/>
            <person name="Caldwell B."/>
            <person name="Capuano V."/>
            <person name="Carter N.M."/>
            <person name="Choi S.-K."/>
            <person name="Codani J.-J."/>
            <person name="Connerton I.F."/>
            <person name="Cummings N.J."/>
            <person name="Daniel R.A."/>
            <person name="Denizot F."/>
            <person name="Devine K.M."/>
            <person name="Duesterhoeft A."/>
            <person name="Ehrlich S.D."/>
            <person name="Emmerson P.T."/>
            <person name="Entian K.-D."/>
            <person name="Errington J."/>
            <person name="Fabret C."/>
            <person name="Ferrari E."/>
            <person name="Foulger D."/>
            <person name="Fritz C."/>
            <person name="Fujita M."/>
            <person name="Fujita Y."/>
            <person name="Fuma S."/>
            <person name="Galizzi A."/>
            <person name="Galleron N."/>
            <person name="Ghim S.-Y."/>
            <person name="Glaser P."/>
            <person name="Goffeau A."/>
            <person name="Golightly E.J."/>
            <person name="Grandi G."/>
            <person name="Guiseppi G."/>
            <person name="Guy B.J."/>
            <person name="Haga K."/>
            <person name="Haiech J."/>
            <person name="Harwood C.R."/>
            <person name="Henaut A."/>
            <person name="Hilbert H."/>
            <person name="Holsappel S."/>
            <person name="Hosono S."/>
            <person name="Hullo M.-F."/>
            <person name="Itaya M."/>
            <person name="Jones L.-M."/>
            <person name="Joris B."/>
            <person name="Karamata D."/>
            <person name="Kasahara Y."/>
            <person name="Klaerr-Blanchard M."/>
            <person name="Klein C."/>
            <person name="Kobayashi Y."/>
            <person name="Koetter P."/>
            <person name="Koningstein G."/>
            <person name="Krogh S."/>
            <person name="Kumano M."/>
            <person name="Kurita K."/>
            <person name="Lapidus A."/>
            <person name="Lardinois S."/>
            <person name="Lauber J."/>
            <person name="Lazarevic V."/>
            <person name="Lee S.-M."/>
            <person name="Levine A."/>
            <person name="Liu H."/>
            <person name="Masuda S."/>
            <person name="Mauel C."/>
            <person name="Medigue C."/>
            <person name="Medina N."/>
            <person name="Mellado R.P."/>
            <person name="Mizuno M."/>
            <person name="Moestl D."/>
            <person name="Nakai S."/>
            <person name="Noback M."/>
            <person name="Noone D."/>
            <person name="O'Reilly M."/>
            <person name="Ogawa K."/>
            <person name="Ogiwara A."/>
            <person name="Oudega B."/>
            <person name="Park S.-H."/>
            <person name="Parro V."/>
            <person name="Pohl T.M."/>
            <person name="Portetelle D."/>
            <person name="Porwollik S."/>
            <person name="Prescott A.M."/>
            <person name="Presecan E."/>
            <person name="Pujic P."/>
            <person name="Purnelle B."/>
            <person name="Rapoport G."/>
            <person name="Rey M."/>
            <person name="Reynolds S."/>
            <person name="Rieger M."/>
            <person name="Rivolta C."/>
            <person name="Rocha E."/>
            <person name="Roche B."/>
            <person name="Rose M."/>
            <person name="Sadaie Y."/>
            <person name="Sato T."/>
            <person name="Scanlan E."/>
            <person name="Schleich S."/>
            <person name="Schroeter R."/>
            <person name="Scoffone F."/>
            <person name="Sekiguchi J."/>
            <person name="Sekowska A."/>
            <person name="Seror S.J."/>
            <person name="Serror P."/>
            <person name="Shin B.-S."/>
            <person name="Soldo B."/>
            <person name="Sorokin A."/>
            <person name="Tacconi E."/>
            <person name="Takagi T."/>
            <person name="Takahashi H."/>
            <person name="Takemaru K."/>
            <person name="Takeuchi M."/>
            <person name="Tamakoshi A."/>
            <person name="Tanaka T."/>
            <person name="Terpstra P."/>
            <person name="Tognoni A."/>
            <person name="Tosato V."/>
            <person name="Uchiyama S."/>
            <person name="Vandenbol M."/>
            <person name="Vannier F."/>
            <person name="Vassarotti A."/>
            <person name="Viari A."/>
            <person name="Wambutt R."/>
            <person name="Wedler E."/>
            <person name="Wedler H."/>
            <person name="Weitzenegger T."/>
            <person name="Winters P."/>
            <person name="Wipat A."/>
            <person name="Yamamoto H."/>
            <person name="Yamane K."/>
            <person name="Yasumoto K."/>
            <person name="Yata K."/>
            <person name="Yoshida K."/>
            <person name="Yoshikawa H.-F."/>
            <person name="Zumstein E."/>
            <person name="Yoshikawa H."/>
            <person name="Danchin A."/>
        </authorList>
    </citation>
    <scope>NUCLEOTIDE SEQUENCE [LARGE SCALE GENOMIC DNA]</scope>
    <source>
        <strain>168</strain>
    </source>
</reference>
<evidence type="ECO:0000250" key="1"/>
<evidence type="ECO:0000305" key="2"/>
<sequence length="399" mass="44009">MHNLQVRRHYAALKGFYLFAFLGTGSIIPLLSMYLTKEQHLSGSQVGLIMSLGPIVMIFFQPFWGMLSDYTQKTKGLLAVCTSITGIIGLAYIAFDSFPLFILIAACFAAFQSTIIPLSDSISLRYTQETNGNYGGIRLFGSLGFGVAVFAMGQVTNQLYPIHVIFIFGCAFLCIAAILASQVPGQQKTTKVNIRKGFRELISNKTFLIFMIITFTTFAPNLANNTYFSLFLDKSGASLSAIGILFFIGVISEIPFMRFAQTFIDKMGLLNVIMLSGGVSLFRWALYFTAPSLWIIYATVFLQGVAIGLFIPAALQYVKKITPRHVEATALTMYAAIGNGFGNWFCTFAGGYIFDYVSIFAVYLLFGILSIAGFGLTLYLMKAEKNKHTLHQPAVTFKP</sequence>
<comment type="subcellular location">
    <subcellularLocation>
        <location evidence="2">Cell membrane</location>
        <topology evidence="2">Multi-pass membrane protein</topology>
    </subcellularLocation>
</comment>
<comment type="similarity">
    <text evidence="2">Belongs to the major facilitator superfamily.</text>
</comment>
<feature type="chain" id="PRO_0000196192" description="Uncharacterized transporter YwbF">
    <location>
        <begin position="1"/>
        <end position="399"/>
    </location>
</feature>
<feature type="topological domain" description="Cytoplasmic" evidence="1">
    <location>
        <begin position="1"/>
        <end position="8"/>
    </location>
</feature>
<feature type="transmembrane region" description="Helical; Name=1" evidence="1">
    <location>
        <begin position="9"/>
        <end position="35"/>
    </location>
</feature>
<feature type="topological domain" description="Extracellular" evidence="1">
    <location>
        <begin position="36"/>
        <end position="42"/>
    </location>
</feature>
<feature type="transmembrane region" description="Helical; Name=2" evidence="1">
    <location>
        <begin position="43"/>
        <end position="71"/>
    </location>
</feature>
<feature type="topological domain" description="Cytoplasmic" evidence="1">
    <location>
        <begin position="72"/>
        <end position="75"/>
    </location>
</feature>
<feature type="transmembrane region" description="Helical; Name=3" evidence="1">
    <location>
        <begin position="76"/>
        <end position="101"/>
    </location>
</feature>
<feature type="topological domain" description="Extracellular" evidence="1">
    <location>
        <begin position="102"/>
        <end position="105"/>
    </location>
</feature>
<feature type="transmembrane region" description="Helical; Name=4" evidence="1">
    <location>
        <begin position="106"/>
        <end position="123"/>
    </location>
</feature>
<feature type="topological domain" description="Cytoplasmic" evidence="1">
    <location>
        <begin position="124"/>
        <end position="134"/>
    </location>
</feature>
<feature type="transmembrane region" description="Helical; Name=5" evidence="1">
    <location>
        <begin position="135"/>
        <end position="157"/>
    </location>
</feature>
<feature type="topological domain" description="Extracellular" evidence="1">
    <location>
        <begin position="158"/>
        <end position="160"/>
    </location>
</feature>
<feature type="transmembrane region" description="Helical; Name=6" evidence="1">
    <location>
        <begin position="161"/>
        <end position="180"/>
    </location>
</feature>
<feature type="topological domain" description="Cytoplasmic" evidence="1">
    <location>
        <begin position="181"/>
        <end position="210"/>
    </location>
</feature>
<feature type="transmembrane region" description="Helical; Name=7" evidence="1">
    <location>
        <begin position="211"/>
        <end position="230"/>
    </location>
</feature>
<feature type="topological domain" description="Extracellular" evidence="1">
    <location>
        <begin position="231"/>
        <end position="234"/>
    </location>
</feature>
<feature type="transmembrane region" description="Helical; Name=8" evidence="1">
    <location>
        <begin position="235"/>
        <end position="259"/>
    </location>
</feature>
<feature type="topological domain" description="Cytoplasmic" evidence="1">
    <location>
        <begin position="260"/>
        <end position="269"/>
    </location>
</feature>
<feature type="transmembrane region" description="Helical; Name=9" evidence="1">
    <location>
        <begin position="270"/>
        <end position="289"/>
    </location>
</feature>
<feature type="topological domain" description="Extracellular" evidence="1">
    <location>
        <begin position="290"/>
        <end position="292"/>
    </location>
</feature>
<feature type="transmembrane region" description="Helical; Name=10" evidence="1">
    <location>
        <begin position="293"/>
        <end position="315"/>
    </location>
</feature>
<feature type="topological domain" description="Cytoplasmic" evidence="1">
    <location>
        <begin position="316"/>
        <end position="327"/>
    </location>
</feature>
<feature type="transmembrane region" description="Helical; Name=11" evidence="1">
    <location>
        <begin position="328"/>
        <end position="355"/>
    </location>
</feature>
<feature type="topological domain" description="Extracellular" evidence="1">
    <location>
        <begin position="356"/>
        <end position="358"/>
    </location>
</feature>
<feature type="transmembrane region" description="Helical; Name=12" evidence="1">
    <location>
        <begin position="359"/>
        <end position="379"/>
    </location>
</feature>
<feature type="topological domain" description="Cytoplasmic" evidence="1">
    <location>
        <begin position="380"/>
        <end position="399"/>
    </location>
</feature>
<gene>
    <name type="primary">ywbF</name>
    <name type="ordered locus">BSU38340</name>
    <name type="ORF">ipa-21r</name>
</gene>
<protein>
    <recommendedName>
        <fullName>Uncharacterized transporter YwbF</fullName>
    </recommendedName>
</protein>
<name>YWBF_BACSU</name>
<dbReference type="EMBL" id="X73124">
    <property type="protein sequence ID" value="CAA51577.1"/>
    <property type="molecule type" value="Genomic_DNA"/>
</dbReference>
<dbReference type="EMBL" id="AL009126">
    <property type="protein sequence ID" value="CAB15860.1"/>
    <property type="molecule type" value="Genomic_DNA"/>
</dbReference>
<dbReference type="PIR" id="S39676">
    <property type="entry name" value="S39676"/>
</dbReference>
<dbReference type="RefSeq" id="NP_391713.1">
    <property type="nucleotide sequence ID" value="NC_000964.3"/>
</dbReference>
<dbReference type="RefSeq" id="WP_003242781.1">
    <property type="nucleotide sequence ID" value="NZ_OZ025638.1"/>
</dbReference>
<dbReference type="SMR" id="P39589"/>
<dbReference type="FunCoup" id="P39589">
    <property type="interactions" value="96"/>
</dbReference>
<dbReference type="STRING" id="224308.BSU38340"/>
<dbReference type="PaxDb" id="224308-BSU38340"/>
<dbReference type="EnsemblBacteria" id="CAB15860">
    <property type="protein sequence ID" value="CAB15860"/>
    <property type="gene ID" value="BSU_38340"/>
</dbReference>
<dbReference type="GeneID" id="937325"/>
<dbReference type="KEGG" id="bsu:BSU38340"/>
<dbReference type="PATRIC" id="fig|224308.179.peg.4150"/>
<dbReference type="eggNOG" id="COG2814">
    <property type="taxonomic scope" value="Bacteria"/>
</dbReference>
<dbReference type="InParanoid" id="P39589"/>
<dbReference type="OrthoDB" id="1650886at2"/>
<dbReference type="PhylomeDB" id="P39589"/>
<dbReference type="BioCyc" id="BSUB:BSU38340-MONOMER"/>
<dbReference type="Proteomes" id="UP000001570">
    <property type="component" value="Chromosome"/>
</dbReference>
<dbReference type="GO" id="GO:0005886">
    <property type="term" value="C:plasma membrane"/>
    <property type="evidence" value="ECO:0000318"/>
    <property type="project" value="GO_Central"/>
</dbReference>
<dbReference type="GO" id="GO:0015212">
    <property type="term" value="F:cytidine transmembrane transporter activity"/>
    <property type="evidence" value="ECO:0000318"/>
    <property type="project" value="GO_Central"/>
</dbReference>
<dbReference type="GO" id="GO:0015293">
    <property type="term" value="F:symporter activity"/>
    <property type="evidence" value="ECO:0007669"/>
    <property type="project" value="UniProtKB-KW"/>
</dbReference>
<dbReference type="GO" id="GO:0015213">
    <property type="term" value="F:uridine transmembrane transporter activity"/>
    <property type="evidence" value="ECO:0000318"/>
    <property type="project" value="GO_Central"/>
</dbReference>
<dbReference type="CDD" id="cd17335">
    <property type="entry name" value="MFS_MFSD6"/>
    <property type="match status" value="1"/>
</dbReference>
<dbReference type="Gene3D" id="1.20.1250.20">
    <property type="entry name" value="MFS general substrate transporter like domains"/>
    <property type="match status" value="2"/>
</dbReference>
<dbReference type="InterPro" id="IPR026032">
    <property type="entry name" value="HcaT-like"/>
</dbReference>
<dbReference type="InterPro" id="IPR024989">
    <property type="entry name" value="MFS_assoc_dom"/>
</dbReference>
<dbReference type="InterPro" id="IPR020846">
    <property type="entry name" value="MFS_dom"/>
</dbReference>
<dbReference type="InterPro" id="IPR036259">
    <property type="entry name" value="MFS_trans_sf"/>
</dbReference>
<dbReference type="PANTHER" id="PTHR23522">
    <property type="entry name" value="BLL5896 PROTEIN"/>
    <property type="match status" value="1"/>
</dbReference>
<dbReference type="PANTHER" id="PTHR23522:SF4">
    <property type="entry name" value="NUCLEOSIDE PERMEASE NUPG-RELATED"/>
    <property type="match status" value="1"/>
</dbReference>
<dbReference type="Pfam" id="PF12832">
    <property type="entry name" value="MFS_1_like"/>
    <property type="match status" value="1"/>
</dbReference>
<dbReference type="PIRSF" id="PIRSF004925">
    <property type="entry name" value="HcaT"/>
    <property type="match status" value="1"/>
</dbReference>
<dbReference type="SUPFAM" id="SSF103473">
    <property type="entry name" value="MFS general substrate transporter"/>
    <property type="match status" value="1"/>
</dbReference>
<dbReference type="PROSITE" id="PS50850">
    <property type="entry name" value="MFS"/>
    <property type="match status" value="1"/>
</dbReference>
<organism>
    <name type="scientific">Bacillus subtilis (strain 168)</name>
    <dbReference type="NCBI Taxonomy" id="224308"/>
    <lineage>
        <taxon>Bacteria</taxon>
        <taxon>Bacillati</taxon>
        <taxon>Bacillota</taxon>
        <taxon>Bacilli</taxon>
        <taxon>Bacillales</taxon>
        <taxon>Bacillaceae</taxon>
        <taxon>Bacillus</taxon>
    </lineage>
</organism>